<sequence>MMPFCHNIINISCVKNNWSNDVRASLYSLMVLIILTTLVGNLIVIVSISHFKELHTPTNWLIHSMATVDFLPGCLVMPYSMVRSAEHCWYFGEVFCKIHTSTDIMLSSASIFHLSFISIDRYYAVCDPLRYKAKINILVICVMIFISWSVPAVFAFGMIFLELNFKGAEEIYYKHVHCRGGCSVFFSKISGVLTFMTSFYIPGSIMLCVYYRIYLIAKEQARLINDANQKLQIGLEMKNGISQSKERKAVKTLGIVMGVFLICWCPFFICTVMDPFLHYIIPPTLNDVLIWFGYLNSTFNPMVYAFFYPWFRKALKMMLFGKIFQKDSSRCKLFLELSS</sequence>
<comment type="function">
    <text evidence="1">Intracellular G-protein coupled receptor for trace amines, which recognizes endogenous amine-containing metabolites such as beta-phenylethylamine (beta-PEA), 3-iodothyronamine (T1AM), isoamylamine (IAA), cadaverine (CAD), cyclohexylamine (CHA), p-tyramine (p-TYR), trimethylamine (TMA), octopamine and tryptamine. Also functions as a receptor for various drugs and psychoactive substances, such as amphetamine and methamphetamine. Unresponsive to classical biogenic amines, such as epinephrine and histamine and only partially activated by dopamine and serotonin. Expressed in both the central and peripheral nervous system: TAAR1 activation regulates the activity of several neurotransmitter signaling pathways by (1) decreasing the basal firing rates of the neurons involved and by (2) lowering the sensitivity of receptors to neurotransmitters. Ligand binding causes a conformation change that triggers signaling via guanine nucleotide-binding proteins (G proteins) and modulates the activity of downstream effectors. TAAR1 is coupled with different G(i)/G(o)-, G(s)- or G(q)/G(11) classes of G alpha proteins depending on the ligand. CAD-binding is coupled to G(i)/G(o) G alpha proteins and mediates inhibition of adenylate cyclase activity. T1AM- or beta-PEA-binding is coupled to G(s) G alpha proteins and mediates activation of adenylate cyclase activity. CHA- or IAA-binding is coupled to G(q)/G(11) G alpha proteins and activates phospholipase C-beta, releasing diacylglycerol (DAG) and inositol 1,4,5-trisphosphate (IP3) second messengers. TMA-binding is coupled with all three G(i)/G(o)-, G(s)- or G(q)/G(11) G alpha protein subtypes.</text>
</comment>
<comment type="subcellular location">
    <subcellularLocation>
        <location evidence="1">Endomembrane system</location>
    </subcellularLocation>
    <subcellularLocation>
        <location evidence="1">Endoplasmic reticulum membrane</location>
        <topology evidence="1">Multi-pass membrane protein</topology>
    </subcellularLocation>
    <subcellularLocation>
        <location evidence="1">Cell membrane</location>
        <topology evidence="1">Multi-pass membrane protein</topology>
    </subcellularLocation>
    <text evidence="1">Localizes mainly intracellularly. Partially colocalizes with the endoplasmic reticulum; also found at lower lever at the plasma membrane.</text>
</comment>
<comment type="similarity">
    <text evidence="3">Belongs to the G-protein coupled receptor 1 family.</text>
</comment>
<organism>
    <name type="scientific">Pan troglodytes</name>
    <name type="common">Chimpanzee</name>
    <dbReference type="NCBI Taxonomy" id="9598"/>
    <lineage>
        <taxon>Eukaryota</taxon>
        <taxon>Metazoa</taxon>
        <taxon>Chordata</taxon>
        <taxon>Craniata</taxon>
        <taxon>Vertebrata</taxon>
        <taxon>Euteleostomi</taxon>
        <taxon>Mammalia</taxon>
        <taxon>Eutheria</taxon>
        <taxon>Euarchontoglires</taxon>
        <taxon>Primates</taxon>
        <taxon>Haplorrhini</taxon>
        <taxon>Catarrhini</taxon>
        <taxon>Hominidae</taxon>
        <taxon>Pan</taxon>
    </lineage>
</organism>
<protein>
    <recommendedName>
        <fullName>Trace amine-associated receptor 1</fullName>
        <shortName>TaR-1</shortName>
        <shortName>Trace amine receptor 1</shortName>
    </recommendedName>
</protein>
<evidence type="ECO:0000250" key="1">
    <source>
        <dbReference type="UniProtKB" id="Q96RJ0"/>
    </source>
</evidence>
<evidence type="ECO:0000255" key="2"/>
<evidence type="ECO:0000255" key="3">
    <source>
        <dbReference type="PROSITE-ProRule" id="PRU00521"/>
    </source>
</evidence>
<keyword id="KW-1003">Cell membrane</keyword>
<keyword id="KW-1015">Disulfide bond</keyword>
<keyword id="KW-0256">Endoplasmic reticulum</keyword>
<keyword id="KW-0297">G-protein coupled receptor</keyword>
<keyword id="KW-0325">Glycoprotein</keyword>
<keyword id="KW-0472">Membrane</keyword>
<keyword id="KW-0675">Receptor</keyword>
<keyword id="KW-1185">Reference proteome</keyword>
<keyword id="KW-0807">Transducer</keyword>
<keyword id="KW-0812">Transmembrane</keyword>
<keyword id="KW-1133">Transmembrane helix</keyword>
<feature type="chain" id="PRO_0000070144" description="Trace amine-associated receptor 1">
    <location>
        <begin position="1"/>
        <end position="339"/>
    </location>
</feature>
<feature type="topological domain" description="Extracellular" evidence="2">
    <location>
        <begin position="1"/>
        <end position="25"/>
    </location>
</feature>
<feature type="transmembrane region" description="Helical; Name=1" evidence="2">
    <location>
        <begin position="26"/>
        <end position="46"/>
    </location>
</feature>
<feature type="topological domain" description="Cytoplasmic" evidence="2">
    <location>
        <begin position="47"/>
        <end position="59"/>
    </location>
</feature>
<feature type="transmembrane region" description="Helical; Name=2" evidence="2">
    <location>
        <begin position="60"/>
        <end position="80"/>
    </location>
</feature>
<feature type="topological domain" description="Extracellular" evidence="2">
    <location>
        <begin position="81"/>
        <end position="98"/>
    </location>
</feature>
<feature type="transmembrane region" description="Helical; Name=3" evidence="2">
    <location>
        <begin position="99"/>
        <end position="119"/>
    </location>
</feature>
<feature type="topological domain" description="Cytoplasmic" evidence="2">
    <location>
        <begin position="120"/>
        <end position="136"/>
    </location>
</feature>
<feature type="transmembrane region" description="Helical; Name=4" evidence="2">
    <location>
        <begin position="137"/>
        <end position="157"/>
    </location>
</feature>
<feature type="topological domain" description="Extracellular" evidence="2">
    <location>
        <begin position="158"/>
        <end position="188"/>
    </location>
</feature>
<feature type="transmembrane region" description="Helical; Name=5" evidence="2">
    <location>
        <begin position="189"/>
        <end position="209"/>
    </location>
</feature>
<feature type="topological domain" description="Cytoplasmic" evidence="2">
    <location>
        <begin position="210"/>
        <end position="252"/>
    </location>
</feature>
<feature type="transmembrane region" description="Helical; Name=6" evidence="2">
    <location>
        <begin position="253"/>
        <end position="273"/>
    </location>
</feature>
<feature type="topological domain" description="Extracellular" evidence="2">
    <location>
        <begin position="274"/>
        <end position="287"/>
    </location>
</feature>
<feature type="transmembrane region" description="Helical; Name=7" evidence="2">
    <location>
        <begin position="288"/>
        <end position="308"/>
    </location>
</feature>
<feature type="topological domain" description="Cytoplasmic" evidence="2">
    <location>
        <begin position="309"/>
        <end position="339"/>
    </location>
</feature>
<feature type="binding site" evidence="1">
    <location>
        <position position="103"/>
    </location>
    <ligand>
        <name>2-phenylethylamine</name>
        <dbReference type="ChEBI" id="CHEBI:225237"/>
    </ligand>
</feature>
<feature type="glycosylation site" description="N-linked (GlcNAc...) asparagine" evidence="2">
    <location>
        <position position="10"/>
    </location>
</feature>
<feature type="glycosylation site" description="N-linked (GlcNAc...) asparagine" evidence="2">
    <location>
        <position position="17"/>
    </location>
</feature>
<feature type="disulfide bond" evidence="1">
    <location>
        <begin position="5"/>
        <end position="178"/>
    </location>
</feature>
<feature type="disulfide bond" evidence="1">
    <location>
        <begin position="13"/>
        <end position="88"/>
    </location>
</feature>
<feature type="disulfide bond" evidence="3">
    <location>
        <begin position="96"/>
        <end position="182"/>
    </location>
</feature>
<gene>
    <name type="primary">TAAR1</name>
    <name type="synonym">TRAR1</name>
</gene>
<name>TAAR1_PANTR</name>
<reference key="1">
    <citation type="journal article" date="2005" name="Genomics">
        <title>Trace amine-associated receptors form structurally and functionally distinct subfamilies of novel G protein-coupled receptors.</title>
        <authorList>
            <person name="Lindemann L."/>
            <person name="Ebeling M."/>
            <person name="Kratochwil N.A."/>
            <person name="Bunzow J.R."/>
            <person name="Grandy D.K."/>
            <person name="Hoener M.C."/>
        </authorList>
    </citation>
    <scope>NUCLEOTIDE SEQUENCE [GENOMIC DNA]</scope>
</reference>
<accession>Q5QD29</accession>
<dbReference type="EMBL" id="AY702307">
    <property type="protein sequence ID" value="AAV70124.1"/>
    <property type="molecule type" value="Genomic_DNA"/>
</dbReference>
<dbReference type="RefSeq" id="NP_001009145.1">
    <property type="nucleotide sequence ID" value="NM_001009145.1"/>
</dbReference>
<dbReference type="SMR" id="Q5QD29"/>
<dbReference type="FunCoup" id="Q5QD29">
    <property type="interactions" value="591"/>
</dbReference>
<dbReference type="STRING" id="9598.ENSPTRP00000031769"/>
<dbReference type="GlyCosmos" id="Q5QD29">
    <property type="glycosylation" value="2 sites, No reported glycans"/>
</dbReference>
<dbReference type="PaxDb" id="9598-ENSPTRP00000031769"/>
<dbReference type="GeneID" id="493908"/>
<dbReference type="KEGG" id="ptr:493908"/>
<dbReference type="CTD" id="134864"/>
<dbReference type="eggNOG" id="KOG3656">
    <property type="taxonomic scope" value="Eukaryota"/>
</dbReference>
<dbReference type="InParanoid" id="Q5QD29"/>
<dbReference type="OrthoDB" id="1805at9604"/>
<dbReference type="Proteomes" id="UP000002277">
    <property type="component" value="Unplaced"/>
</dbReference>
<dbReference type="GO" id="GO:0005789">
    <property type="term" value="C:endoplasmic reticulum membrane"/>
    <property type="evidence" value="ECO:0007669"/>
    <property type="project" value="UniProtKB-SubCell"/>
</dbReference>
<dbReference type="GO" id="GO:0005886">
    <property type="term" value="C:plasma membrane"/>
    <property type="evidence" value="ECO:0000318"/>
    <property type="project" value="GO_Central"/>
</dbReference>
<dbReference type="GO" id="GO:0001594">
    <property type="term" value="F:trace-amine receptor activity"/>
    <property type="evidence" value="ECO:0000318"/>
    <property type="project" value="GO_Central"/>
</dbReference>
<dbReference type="GO" id="GO:0007186">
    <property type="term" value="P:G protein-coupled receptor signaling pathway"/>
    <property type="evidence" value="ECO:0000318"/>
    <property type="project" value="GO_Central"/>
</dbReference>
<dbReference type="CDD" id="cd15314">
    <property type="entry name" value="7tmA_TAAR1"/>
    <property type="match status" value="1"/>
</dbReference>
<dbReference type="FunFam" id="1.20.1070.10:FF:000030">
    <property type="entry name" value="trace amine-associated receptor 1"/>
    <property type="match status" value="1"/>
</dbReference>
<dbReference type="Gene3D" id="1.20.1070.10">
    <property type="entry name" value="Rhodopsin 7-helix transmembrane proteins"/>
    <property type="match status" value="1"/>
</dbReference>
<dbReference type="InterPro" id="IPR000276">
    <property type="entry name" value="GPCR_Rhodpsn"/>
</dbReference>
<dbReference type="InterPro" id="IPR017452">
    <property type="entry name" value="GPCR_Rhodpsn_7TM"/>
</dbReference>
<dbReference type="InterPro" id="IPR050569">
    <property type="entry name" value="TAAR"/>
</dbReference>
<dbReference type="InterPro" id="IPR009133">
    <property type="entry name" value="TAAR1"/>
</dbReference>
<dbReference type="InterPro" id="IPR009132">
    <property type="entry name" value="TAAR_fam"/>
</dbReference>
<dbReference type="PANTHER" id="PTHR24249">
    <property type="entry name" value="HISTAMINE RECEPTOR-RELATED G-PROTEIN COUPLED RECEPTOR"/>
    <property type="match status" value="1"/>
</dbReference>
<dbReference type="PANTHER" id="PTHR24249:SF415">
    <property type="entry name" value="TRACE AMINE-ASSOCIATED RECEPTOR 1"/>
    <property type="match status" value="1"/>
</dbReference>
<dbReference type="Pfam" id="PF00001">
    <property type="entry name" value="7tm_1"/>
    <property type="match status" value="1"/>
</dbReference>
<dbReference type="PRINTS" id="PR00237">
    <property type="entry name" value="GPCRRHODOPSN"/>
</dbReference>
<dbReference type="PRINTS" id="PR01831">
    <property type="entry name" value="TRACEAMINE1R"/>
</dbReference>
<dbReference type="PRINTS" id="PR01830">
    <property type="entry name" value="TRACEAMINER"/>
</dbReference>
<dbReference type="SMART" id="SM01381">
    <property type="entry name" value="7TM_GPCR_Srsx"/>
    <property type="match status" value="1"/>
</dbReference>
<dbReference type="SUPFAM" id="SSF81321">
    <property type="entry name" value="Family A G protein-coupled receptor-like"/>
    <property type="match status" value="1"/>
</dbReference>
<dbReference type="PROSITE" id="PS00237">
    <property type="entry name" value="G_PROTEIN_RECEP_F1_1"/>
    <property type="match status" value="1"/>
</dbReference>
<dbReference type="PROSITE" id="PS50262">
    <property type="entry name" value="G_PROTEIN_RECEP_F1_2"/>
    <property type="match status" value="1"/>
</dbReference>
<proteinExistence type="inferred from homology"/>